<gene>
    <name evidence="1" type="primary">rpsG</name>
    <name type="ordered locus">NE2054</name>
</gene>
<protein>
    <recommendedName>
        <fullName evidence="1">Small ribosomal subunit protein uS7</fullName>
    </recommendedName>
    <alternativeName>
        <fullName evidence="2">30S ribosomal protein S7</fullName>
    </alternativeName>
</protein>
<reference key="1">
    <citation type="journal article" date="2003" name="J. Bacteriol.">
        <title>Complete genome sequence of the ammonia-oxidizing bacterium and obligate chemolithoautotroph Nitrosomonas europaea.</title>
        <authorList>
            <person name="Chain P."/>
            <person name="Lamerdin J.E."/>
            <person name="Larimer F.W."/>
            <person name="Regala W."/>
            <person name="Lao V."/>
            <person name="Land M.L."/>
            <person name="Hauser L."/>
            <person name="Hooper A.B."/>
            <person name="Klotz M.G."/>
            <person name="Norton J."/>
            <person name="Sayavedra-Soto L.A."/>
            <person name="Arciero D.M."/>
            <person name="Hommes N.G."/>
            <person name="Whittaker M.M."/>
            <person name="Arp D.J."/>
        </authorList>
    </citation>
    <scope>NUCLEOTIDE SEQUENCE [LARGE SCALE GENOMIC DNA]</scope>
    <source>
        <strain>ATCC 19718 / CIP 103999 / KCTC 2705 / NBRC 14298</strain>
    </source>
</reference>
<proteinExistence type="inferred from homology"/>
<dbReference type="EMBL" id="AL954747">
    <property type="protein sequence ID" value="CAD85965.1"/>
    <property type="molecule type" value="Genomic_DNA"/>
</dbReference>
<dbReference type="RefSeq" id="WP_011112566.1">
    <property type="nucleotide sequence ID" value="NC_004757.1"/>
</dbReference>
<dbReference type="SMR" id="Q82T69"/>
<dbReference type="STRING" id="228410.NE2054"/>
<dbReference type="GeneID" id="87105193"/>
<dbReference type="KEGG" id="neu:NE2054"/>
<dbReference type="eggNOG" id="COG0049">
    <property type="taxonomic scope" value="Bacteria"/>
</dbReference>
<dbReference type="HOGENOM" id="CLU_072226_1_1_4"/>
<dbReference type="OrthoDB" id="9807653at2"/>
<dbReference type="PhylomeDB" id="Q82T69"/>
<dbReference type="Proteomes" id="UP000001416">
    <property type="component" value="Chromosome"/>
</dbReference>
<dbReference type="GO" id="GO:0015935">
    <property type="term" value="C:small ribosomal subunit"/>
    <property type="evidence" value="ECO:0007669"/>
    <property type="project" value="InterPro"/>
</dbReference>
<dbReference type="GO" id="GO:0019843">
    <property type="term" value="F:rRNA binding"/>
    <property type="evidence" value="ECO:0007669"/>
    <property type="project" value="UniProtKB-UniRule"/>
</dbReference>
<dbReference type="GO" id="GO:0003735">
    <property type="term" value="F:structural constituent of ribosome"/>
    <property type="evidence" value="ECO:0007669"/>
    <property type="project" value="InterPro"/>
</dbReference>
<dbReference type="GO" id="GO:0000049">
    <property type="term" value="F:tRNA binding"/>
    <property type="evidence" value="ECO:0007669"/>
    <property type="project" value="UniProtKB-UniRule"/>
</dbReference>
<dbReference type="GO" id="GO:0006412">
    <property type="term" value="P:translation"/>
    <property type="evidence" value="ECO:0007669"/>
    <property type="project" value="UniProtKB-UniRule"/>
</dbReference>
<dbReference type="CDD" id="cd14869">
    <property type="entry name" value="uS7_Bacteria"/>
    <property type="match status" value="1"/>
</dbReference>
<dbReference type="FunFam" id="1.10.455.10:FF:000001">
    <property type="entry name" value="30S ribosomal protein S7"/>
    <property type="match status" value="1"/>
</dbReference>
<dbReference type="Gene3D" id="1.10.455.10">
    <property type="entry name" value="Ribosomal protein S7 domain"/>
    <property type="match status" value="1"/>
</dbReference>
<dbReference type="HAMAP" id="MF_00480_B">
    <property type="entry name" value="Ribosomal_uS7_B"/>
    <property type="match status" value="1"/>
</dbReference>
<dbReference type="InterPro" id="IPR000235">
    <property type="entry name" value="Ribosomal_uS7"/>
</dbReference>
<dbReference type="InterPro" id="IPR005717">
    <property type="entry name" value="Ribosomal_uS7_bac/org-type"/>
</dbReference>
<dbReference type="InterPro" id="IPR020606">
    <property type="entry name" value="Ribosomal_uS7_CS"/>
</dbReference>
<dbReference type="InterPro" id="IPR023798">
    <property type="entry name" value="Ribosomal_uS7_dom"/>
</dbReference>
<dbReference type="InterPro" id="IPR036823">
    <property type="entry name" value="Ribosomal_uS7_dom_sf"/>
</dbReference>
<dbReference type="NCBIfam" id="TIGR01029">
    <property type="entry name" value="rpsG_bact"/>
    <property type="match status" value="1"/>
</dbReference>
<dbReference type="PANTHER" id="PTHR11205">
    <property type="entry name" value="RIBOSOMAL PROTEIN S7"/>
    <property type="match status" value="1"/>
</dbReference>
<dbReference type="Pfam" id="PF00177">
    <property type="entry name" value="Ribosomal_S7"/>
    <property type="match status" value="1"/>
</dbReference>
<dbReference type="PIRSF" id="PIRSF002122">
    <property type="entry name" value="RPS7p_RPS7a_RPS5e_RPS7o"/>
    <property type="match status" value="1"/>
</dbReference>
<dbReference type="SUPFAM" id="SSF47973">
    <property type="entry name" value="Ribosomal protein S7"/>
    <property type="match status" value="1"/>
</dbReference>
<dbReference type="PROSITE" id="PS00052">
    <property type="entry name" value="RIBOSOMAL_S7"/>
    <property type="match status" value="1"/>
</dbReference>
<accession>Q82T69</accession>
<comment type="function">
    <text evidence="1">One of the primary rRNA binding proteins, it binds directly to 16S rRNA where it nucleates assembly of the head domain of the 30S subunit. Is located at the subunit interface close to the decoding center, probably blocks exit of the E-site tRNA.</text>
</comment>
<comment type="subunit">
    <text evidence="1">Part of the 30S ribosomal subunit. Contacts proteins S9 and S11.</text>
</comment>
<comment type="similarity">
    <text evidence="1">Belongs to the universal ribosomal protein uS7 family.</text>
</comment>
<name>RS7_NITEU</name>
<feature type="chain" id="PRO_0000124309" description="Small ribosomal subunit protein uS7">
    <location>
        <begin position="1"/>
        <end position="156"/>
    </location>
</feature>
<evidence type="ECO:0000255" key="1">
    <source>
        <dbReference type="HAMAP-Rule" id="MF_00480"/>
    </source>
</evidence>
<evidence type="ECO:0000305" key="2"/>
<sequence length="156" mass="18020">MPRRREVPKREILPDPKYHNIELAKFVNVLMTRGKKSVAEQIIYGALNHLEKKTGKDPVEVFTQALSNIRPVVEVKSRRVGGANYQVPVEVRSIRRSALAMRWLRDAARKRSEKSMDLRLASELLEASENRGAAIKKREEVHRMAESNKAFSHFRF</sequence>
<keyword id="KW-1185">Reference proteome</keyword>
<keyword id="KW-0687">Ribonucleoprotein</keyword>
<keyword id="KW-0689">Ribosomal protein</keyword>
<keyword id="KW-0694">RNA-binding</keyword>
<keyword id="KW-0699">rRNA-binding</keyword>
<keyword id="KW-0820">tRNA-binding</keyword>
<organism>
    <name type="scientific">Nitrosomonas europaea (strain ATCC 19718 / CIP 103999 / KCTC 2705 / NBRC 14298)</name>
    <dbReference type="NCBI Taxonomy" id="228410"/>
    <lineage>
        <taxon>Bacteria</taxon>
        <taxon>Pseudomonadati</taxon>
        <taxon>Pseudomonadota</taxon>
        <taxon>Betaproteobacteria</taxon>
        <taxon>Nitrosomonadales</taxon>
        <taxon>Nitrosomonadaceae</taxon>
        <taxon>Nitrosomonas</taxon>
    </lineage>
</organism>